<keyword id="KW-0325">Glycoprotein</keyword>
<keyword id="KW-0378">Hydrolase</keyword>
<keyword id="KW-0458">Lysosome</keyword>
<keyword id="KW-1185">Reference proteome</keyword>
<keyword id="KW-0964">Secreted</keyword>
<keyword id="KW-0732">Signal</keyword>
<sequence length="318" mass="35683">MARLGRLLSVLGLVLCGATGLGLSAPPAPTPKKPIIGILMQKCHNKNMRALGKYYIAASYVKFLESAGARVVPVRLDLKNEEYEKLFKSINGVLFPGGSVNLMRSGYARVAKMFYNLSIKSFGEGDYFPVWGTCLGFEELIYLVSGESLLTLTDTVGIKLPLNFSRGTLQSRMFQNFPADLLLSLAVEPLTAHFHKWSLSVMNFTKNEKLKAFFSILTTNTDGNIDFISTMEGYRYPIYGVQWHPEKAPYEWGQLRGISHAPNAVKAAFYLAEFFVAEARKSNHHFESDVEETKALIYQYRPTYTGNVSSFQQSYIFD</sequence>
<proteinExistence type="evidence at transcript level"/>
<dbReference type="EC" id="3.4.19.9"/>
<dbReference type="EMBL" id="BC134544">
    <property type="protein sequence ID" value="AAI34545.1"/>
    <property type="molecule type" value="mRNA"/>
</dbReference>
<dbReference type="RefSeq" id="NP_001098864.1">
    <property type="nucleotide sequence ID" value="NM_001105394.1"/>
</dbReference>
<dbReference type="SMR" id="A7YWG4"/>
<dbReference type="FunCoup" id="A7YWG4">
    <property type="interactions" value="420"/>
</dbReference>
<dbReference type="STRING" id="9913.ENSBTAP00000009917"/>
<dbReference type="MEROPS" id="C26.001"/>
<dbReference type="GlyCosmos" id="A7YWG4">
    <property type="glycosylation" value="4 sites, No reported glycans"/>
</dbReference>
<dbReference type="GlyGen" id="A7YWG4">
    <property type="glycosylation" value="4 sites"/>
</dbReference>
<dbReference type="PaxDb" id="9913-ENSBTAP00000009917"/>
<dbReference type="Ensembl" id="ENSBTAT00000009917.5">
    <property type="protein sequence ID" value="ENSBTAP00000009917.4"/>
    <property type="gene ID" value="ENSBTAG00000007534.5"/>
</dbReference>
<dbReference type="GeneID" id="525303"/>
<dbReference type="KEGG" id="bta:525303"/>
<dbReference type="CTD" id="8836"/>
<dbReference type="VEuPathDB" id="HostDB:ENSBTAG00000007534"/>
<dbReference type="VGNC" id="VGNC:29340">
    <property type="gene designation" value="GGH"/>
</dbReference>
<dbReference type="eggNOG" id="KOG1559">
    <property type="taxonomic scope" value="Eukaryota"/>
</dbReference>
<dbReference type="GeneTree" id="ENSGT00490000043388"/>
<dbReference type="HOGENOM" id="CLU_058704_1_1_1"/>
<dbReference type="InParanoid" id="A7YWG4"/>
<dbReference type="OMA" id="EPVSSHF"/>
<dbReference type="OrthoDB" id="64220at2759"/>
<dbReference type="TreeFam" id="TF323437"/>
<dbReference type="Reactome" id="R-BTA-6798695">
    <property type="pathway name" value="Neutrophil degranulation"/>
</dbReference>
<dbReference type="Proteomes" id="UP000009136">
    <property type="component" value="Chromosome 14"/>
</dbReference>
<dbReference type="Bgee" id="ENSBTAG00000007534">
    <property type="expression patterns" value="Expressed in thyroid gland and 106 other cell types or tissues"/>
</dbReference>
<dbReference type="GO" id="GO:0005615">
    <property type="term" value="C:extracellular space"/>
    <property type="evidence" value="ECO:0007669"/>
    <property type="project" value="Ensembl"/>
</dbReference>
<dbReference type="GO" id="GO:0005764">
    <property type="term" value="C:lysosome"/>
    <property type="evidence" value="ECO:0007669"/>
    <property type="project" value="UniProtKB-SubCell"/>
</dbReference>
<dbReference type="GO" id="GO:0042470">
    <property type="term" value="C:melanosome"/>
    <property type="evidence" value="ECO:0007669"/>
    <property type="project" value="UniProtKB-SubCell"/>
</dbReference>
<dbReference type="GO" id="GO:0005773">
    <property type="term" value="C:vacuole"/>
    <property type="evidence" value="ECO:0000318"/>
    <property type="project" value="GO_Central"/>
</dbReference>
<dbReference type="GO" id="GO:0034722">
    <property type="term" value="F:gamma-glutamyl-peptidase activity"/>
    <property type="evidence" value="ECO:0000250"/>
    <property type="project" value="UniProtKB"/>
</dbReference>
<dbReference type="GO" id="GO:0046900">
    <property type="term" value="P:tetrahydrofolylpolyglutamate metabolic process"/>
    <property type="evidence" value="ECO:0000318"/>
    <property type="project" value="GO_Central"/>
</dbReference>
<dbReference type="CDD" id="cd01747">
    <property type="entry name" value="GATase1_Glutamyl_Hydrolase"/>
    <property type="match status" value="1"/>
</dbReference>
<dbReference type="FunFam" id="3.40.50.880:FF:000024">
    <property type="entry name" value="Folate gamma-glutamyl hydrolase"/>
    <property type="match status" value="1"/>
</dbReference>
<dbReference type="Gene3D" id="3.40.50.880">
    <property type="match status" value="1"/>
</dbReference>
<dbReference type="InterPro" id="IPR029062">
    <property type="entry name" value="Class_I_gatase-like"/>
</dbReference>
<dbReference type="InterPro" id="IPR015527">
    <property type="entry name" value="Pept_C26_g-glut_hydrolase"/>
</dbReference>
<dbReference type="InterPro" id="IPR011697">
    <property type="entry name" value="Peptidase_C26"/>
</dbReference>
<dbReference type="PANTHER" id="PTHR11315:SF20">
    <property type="entry name" value="GAMMA-GLUTAMYL HYDROLASE"/>
    <property type="match status" value="1"/>
</dbReference>
<dbReference type="PANTHER" id="PTHR11315">
    <property type="entry name" value="PROTEASE FAMILY C26 GAMMA-GLUTAMYL HYDROLASE"/>
    <property type="match status" value="1"/>
</dbReference>
<dbReference type="Pfam" id="PF07722">
    <property type="entry name" value="Peptidase_C26"/>
    <property type="match status" value="1"/>
</dbReference>
<dbReference type="SUPFAM" id="SSF52317">
    <property type="entry name" value="Class I glutamine amidotransferase-like"/>
    <property type="match status" value="1"/>
</dbReference>
<dbReference type="PROSITE" id="PS51275">
    <property type="entry name" value="PEPTIDASE_C26_GGH"/>
    <property type="match status" value="1"/>
</dbReference>
<name>GGH_BOVIN</name>
<comment type="function">
    <text evidence="1">Hydrolyzes the polyglutamate sidechains of pteroylpolyglutamates. Progressively removes gamma-glutamyl residues from pteroylpoly-gamma-glutamate to yield pteroyl-alpha-glutamate (folic acid) and free glutamate. May play an important role in the bioavailability of dietary pteroylpolyglutamates and in the metabolism of pteroylpolyglutamates and antifolates. Exhibits either endo- or exopeptidase activity depending upon the tissue of origin. When secreted, it acts primarily as an endopeptidase (By similarity).</text>
</comment>
<comment type="catalytic activity">
    <reaction>
        <text>(6S)-5,6,7,8-tetrahydrofolyl-(gamma-L-Glu)(n) + (n-1) H2O = (6S)-5,6,7,8-tetrahydrofolate + (n-1) L-glutamate</text>
        <dbReference type="Rhea" id="RHEA:56784"/>
        <dbReference type="Rhea" id="RHEA-COMP:14738"/>
        <dbReference type="ChEBI" id="CHEBI:15377"/>
        <dbReference type="ChEBI" id="CHEBI:29985"/>
        <dbReference type="ChEBI" id="CHEBI:57453"/>
        <dbReference type="ChEBI" id="CHEBI:141005"/>
        <dbReference type="EC" id="3.4.19.9"/>
    </reaction>
</comment>
<comment type="subunit">
    <text evidence="1">Homodimer.</text>
</comment>
<comment type="subcellular location">
    <subcellularLocation>
        <location evidence="2">Secreted</location>
        <location evidence="2">Extracellular space</location>
    </subcellularLocation>
    <subcellularLocation>
        <location evidence="2">Lysosome</location>
    </subcellularLocation>
    <subcellularLocation>
        <location evidence="2">Melanosome</location>
    </subcellularLocation>
    <text evidence="2">While its intracellular location is primarily the lysosome, most of the enzyme activity is secreted.</text>
</comment>
<comment type="similarity">
    <text evidence="5">Belongs to the peptidase C26 family.</text>
</comment>
<accession>A7YWG4</accession>
<feature type="signal peptide" evidence="3">
    <location>
        <begin position="1"/>
        <end position="24"/>
    </location>
</feature>
<feature type="chain" id="PRO_0000327991" description="Gamma-glutamyl hydrolase">
    <location>
        <begin position="25"/>
        <end position="318"/>
    </location>
</feature>
<feature type="domain" description="Gamma-glutamyl hydrolase" evidence="4">
    <location>
        <begin position="25"/>
        <end position="318"/>
    </location>
</feature>
<feature type="active site" description="Nucleophile" evidence="4">
    <location>
        <position position="134"/>
    </location>
</feature>
<feature type="active site" description="Proton donor" evidence="4">
    <location>
        <position position="244"/>
    </location>
</feature>
<feature type="glycosylation site" description="N-linked (GlcNAc...) asparagine" evidence="3">
    <location>
        <position position="116"/>
    </location>
</feature>
<feature type="glycosylation site" description="N-linked (GlcNAc...) asparagine" evidence="3">
    <location>
        <position position="163"/>
    </location>
</feature>
<feature type="glycosylation site" description="N-linked (GlcNAc...) asparagine" evidence="3">
    <location>
        <position position="203"/>
    </location>
</feature>
<feature type="glycosylation site" description="N-linked (GlcNAc...) asparagine" evidence="3">
    <location>
        <position position="307"/>
    </location>
</feature>
<protein>
    <recommendedName>
        <fullName>Gamma-glutamyl hydrolase</fullName>
        <ecNumber>3.4.19.9</ecNumber>
    </recommendedName>
    <alternativeName>
        <fullName>Conjugase</fullName>
    </alternativeName>
    <alternativeName>
        <fullName>GH</fullName>
    </alternativeName>
    <alternativeName>
        <fullName>Gamma-Glu-X carboxypeptidase</fullName>
    </alternativeName>
</protein>
<reference key="1">
    <citation type="submission" date="2007-03" db="EMBL/GenBank/DDBJ databases">
        <authorList>
            <consortium name="NIH - Mammalian Gene Collection (MGC) project"/>
        </authorList>
    </citation>
    <scope>NUCLEOTIDE SEQUENCE [LARGE SCALE MRNA]</scope>
    <source>
        <strain>Hereford</strain>
        <tissue>Thalamus</tissue>
    </source>
</reference>
<evidence type="ECO:0000250" key="1"/>
<evidence type="ECO:0000250" key="2">
    <source>
        <dbReference type="UniProtKB" id="Q92820"/>
    </source>
</evidence>
<evidence type="ECO:0000255" key="3"/>
<evidence type="ECO:0000255" key="4">
    <source>
        <dbReference type="PROSITE-ProRule" id="PRU00607"/>
    </source>
</evidence>
<evidence type="ECO:0000305" key="5"/>
<gene>
    <name type="primary">GGH</name>
</gene>
<organism>
    <name type="scientific">Bos taurus</name>
    <name type="common">Bovine</name>
    <dbReference type="NCBI Taxonomy" id="9913"/>
    <lineage>
        <taxon>Eukaryota</taxon>
        <taxon>Metazoa</taxon>
        <taxon>Chordata</taxon>
        <taxon>Craniata</taxon>
        <taxon>Vertebrata</taxon>
        <taxon>Euteleostomi</taxon>
        <taxon>Mammalia</taxon>
        <taxon>Eutheria</taxon>
        <taxon>Laurasiatheria</taxon>
        <taxon>Artiodactyla</taxon>
        <taxon>Ruminantia</taxon>
        <taxon>Pecora</taxon>
        <taxon>Bovidae</taxon>
        <taxon>Bovinae</taxon>
        <taxon>Bos</taxon>
    </lineage>
</organism>